<accession>B5BAQ2</accession>
<proteinExistence type="inferred from homology"/>
<comment type="function">
    <text evidence="1">Catalyzes the attachment of proline to tRNA(Pro) in a two-step reaction: proline is first activated by ATP to form Pro-AMP and then transferred to the acceptor end of tRNA(Pro). As ProRS can inadvertently accommodate and process non-cognate amino acids such as alanine and cysteine, to avoid such errors it has two additional distinct editing activities against alanine. One activity is designated as 'pretransfer' editing and involves the tRNA(Pro)-independent hydrolysis of activated Ala-AMP. The other activity is designated 'posttransfer' editing and involves deacylation of mischarged Ala-tRNA(Pro). The misacylated Cys-tRNA(Pro) is not edited by ProRS.</text>
</comment>
<comment type="catalytic activity">
    <reaction evidence="1">
        <text>tRNA(Pro) + L-proline + ATP = L-prolyl-tRNA(Pro) + AMP + diphosphate</text>
        <dbReference type="Rhea" id="RHEA:14305"/>
        <dbReference type="Rhea" id="RHEA-COMP:9700"/>
        <dbReference type="Rhea" id="RHEA-COMP:9702"/>
        <dbReference type="ChEBI" id="CHEBI:30616"/>
        <dbReference type="ChEBI" id="CHEBI:33019"/>
        <dbReference type="ChEBI" id="CHEBI:60039"/>
        <dbReference type="ChEBI" id="CHEBI:78442"/>
        <dbReference type="ChEBI" id="CHEBI:78532"/>
        <dbReference type="ChEBI" id="CHEBI:456215"/>
        <dbReference type="EC" id="6.1.1.15"/>
    </reaction>
</comment>
<comment type="subunit">
    <text evidence="1">Homodimer.</text>
</comment>
<comment type="subcellular location">
    <subcellularLocation>
        <location evidence="1">Cytoplasm</location>
    </subcellularLocation>
</comment>
<comment type="domain">
    <text evidence="1">Consists of three domains: the N-terminal catalytic domain, the editing domain and the C-terminal anticodon-binding domain.</text>
</comment>
<comment type="similarity">
    <text evidence="1">Belongs to the class-II aminoacyl-tRNA synthetase family. ProS type 1 subfamily.</text>
</comment>
<organism>
    <name type="scientific">Salmonella paratyphi A (strain AKU_12601)</name>
    <dbReference type="NCBI Taxonomy" id="554290"/>
    <lineage>
        <taxon>Bacteria</taxon>
        <taxon>Pseudomonadati</taxon>
        <taxon>Pseudomonadota</taxon>
        <taxon>Gammaproteobacteria</taxon>
        <taxon>Enterobacterales</taxon>
        <taxon>Enterobacteriaceae</taxon>
        <taxon>Salmonella</taxon>
    </lineage>
</organism>
<evidence type="ECO:0000255" key="1">
    <source>
        <dbReference type="HAMAP-Rule" id="MF_01569"/>
    </source>
</evidence>
<reference key="1">
    <citation type="journal article" date="2009" name="BMC Genomics">
        <title>Pseudogene accumulation in the evolutionary histories of Salmonella enterica serovars Paratyphi A and Typhi.</title>
        <authorList>
            <person name="Holt K.E."/>
            <person name="Thomson N.R."/>
            <person name="Wain J."/>
            <person name="Langridge G.C."/>
            <person name="Hasan R."/>
            <person name="Bhutta Z.A."/>
            <person name="Quail M.A."/>
            <person name="Norbertczak H."/>
            <person name="Walker D."/>
            <person name="Simmonds M."/>
            <person name="White B."/>
            <person name="Bason N."/>
            <person name="Mungall K."/>
            <person name="Dougan G."/>
            <person name="Parkhill J."/>
        </authorList>
    </citation>
    <scope>NUCLEOTIDE SEQUENCE [LARGE SCALE GENOMIC DNA]</scope>
    <source>
        <strain>AKU_12601</strain>
    </source>
</reference>
<name>SYP_SALPK</name>
<sequence length="572" mass="63540">MRTSQYLLSTLKETPADAEVISHQLMLRAGMIRKLASGLYTWLPTGLRVLKKVENIVREEMNNAGAIEVSMPVVQPADLWQESGRWEQYGPELLRFVDRGERPFVLGPTHEEVITDLVRNELSSYKQLPLNFFQIQTKFRDEVRPRFGVMRSREFLMKDAYSFHTSQESLQETYDAMYAAYSRIFSRMGLDFRAVQADTGSIGGNASHEFQVLAQSGEDDIVFSDVSDYAANIELAEAIAPQTPRAAATQEMTLVDTPNAKTIAELVEQFNLPIEKTVKTLLVKAVKDSKSPLVALLVRGDHELNEVKAEKLPHVASPLTFATEEEIRAVINAGPGSLGPVNMPIPVIIDRTVAAMSDFAAGANIDGKHYFGINWDRDVATPVVADIRNVVAGDPSPDGQGTLLIKRGIEVGHIFQLGTKYSEALKASVQGEDGRNQILTMGCYGIGVTRVVAAAIEQNFDERGIVWPDAIAPFQVAILPMNMHKSFRVQELAEKLYSELRAQGIEVLMDDRKERPGVMFADMELIGIPHTIVIGDRNLDNDDIEYKYRRSGEKSLIKTGDIVDYLVKAIKG</sequence>
<gene>
    <name evidence="1" type="primary">proS</name>
    <name type="ordered locus">SSPA0241</name>
</gene>
<dbReference type="EC" id="6.1.1.15" evidence="1"/>
<dbReference type="EMBL" id="FM200053">
    <property type="protein sequence ID" value="CAR58355.1"/>
    <property type="molecule type" value="Genomic_DNA"/>
</dbReference>
<dbReference type="RefSeq" id="WP_001260683.1">
    <property type="nucleotide sequence ID" value="NC_011147.1"/>
</dbReference>
<dbReference type="SMR" id="B5BAQ2"/>
<dbReference type="KEGG" id="sek:SSPA0241"/>
<dbReference type="HOGENOM" id="CLU_016739_0_0_6"/>
<dbReference type="Proteomes" id="UP000001869">
    <property type="component" value="Chromosome"/>
</dbReference>
<dbReference type="GO" id="GO:0005829">
    <property type="term" value="C:cytosol"/>
    <property type="evidence" value="ECO:0007669"/>
    <property type="project" value="TreeGrafter"/>
</dbReference>
<dbReference type="GO" id="GO:0002161">
    <property type="term" value="F:aminoacyl-tRNA deacylase activity"/>
    <property type="evidence" value="ECO:0007669"/>
    <property type="project" value="InterPro"/>
</dbReference>
<dbReference type="GO" id="GO:0005524">
    <property type="term" value="F:ATP binding"/>
    <property type="evidence" value="ECO:0007669"/>
    <property type="project" value="UniProtKB-UniRule"/>
</dbReference>
<dbReference type="GO" id="GO:0004827">
    <property type="term" value="F:proline-tRNA ligase activity"/>
    <property type="evidence" value="ECO:0007669"/>
    <property type="project" value="UniProtKB-UniRule"/>
</dbReference>
<dbReference type="GO" id="GO:0006433">
    <property type="term" value="P:prolyl-tRNA aminoacylation"/>
    <property type="evidence" value="ECO:0007669"/>
    <property type="project" value="UniProtKB-UniRule"/>
</dbReference>
<dbReference type="CDD" id="cd04334">
    <property type="entry name" value="ProRS-INS"/>
    <property type="match status" value="1"/>
</dbReference>
<dbReference type="CDD" id="cd00861">
    <property type="entry name" value="ProRS_anticodon_short"/>
    <property type="match status" value="1"/>
</dbReference>
<dbReference type="CDD" id="cd00779">
    <property type="entry name" value="ProRS_core_prok"/>
    <property type="match status" value="1"/>
</dbReference>
<dbReference type="FunFam" id="3.30.930.10:FF:000012">
    <property type="entry name" value="Proline--tRNA ligase"/>
    <property type="match status" value="1"/>
</dbReference>
<dbReference type="FunFam" id="3.30.930.10:FF:000097">
    <property type="entry name" value="Proline--tRNA ligase"/>
    <property type="match status" value="1"/>
</dbReference>
<dbReference type="FunFam" id="3.40.50.800:FF:000006">
    <property type="entry name" value="Proline--tRNA ligase"/>
    <property type="match status" value="1"/>
</dbReference>
<dbReference type="FunFam" id="3.90.960.10:FF:000001">
    <property type="entry name" value="Proline--tRNA ligase"/>
    <property type="match status" value="1"/>
</dbReference>
<dbReference type="Gene3D" id="3.40.50.800">
    <property type="entry name" value="Anticodon-binding domain"/>
    <property type="match status" value="1"/>
</dbReference>
<dbReference type="Gene3D" id="3.30.930.10">
    <property type="entry name" value="Bira Bifunctional Protein, Domain 2"/>
    <property type="match status" value="2"/>
</dbReference>
<dbReference type="Gene3D" id="3.90.960.10">
    <property type="entry name" value="YbaK/aminoacyl-tRNA synthetase-associated domain"/>
    <property type="match status" value="1"/>
</dbReference>
<dbReference type="HAMAP" id="MF_01569">
    <property type="entry name" value="Pro_tRNA_synth_type1"/>
    <property type="match status" value="1"/>
</dbReference>
<dbReference type="InterPro" id="IPR002314">
    <property type="entry name" value="aa-tRNA-synt_IIb"/>
</dbReference>
<dbReference type="InterPro" id="IPR006195">
    <property type="entry name" value="aa-tRNA-synth_II"/>
</dbReference>
<dbReference type="InterPro" id="IPR045864">
    <property type="entry name" value="aa-tRNA-synth_II/BPL/LPL"/>
</dbReference>
<dbReference type="InterPro" id="IPR004154">
    <property type="entry name" value="Anticodon-bd"/>
</dbReference>
<dbReference type="InterPro" id="IPR036621">
    <property type="entry name" value="Anticodon-bd_dom_sf"/>
</dbReference>
<dbReference type="InterPro" id="IPR002316">
    <property type="entry name" value="Pro-tRNA-ligase_IIa"/>
</dbReference>
<dbReference type="InterPro" id="IPR004500">
    <property type="entry name" value="Pro-tRNA-synth_IIa_bac-type"/>
</dbReference>
<dbReference type="InterPro" id="IPR023717">
    <property type="entry name" value="Pro-tRNA-Synthase_IIa_type1"/>
</dbReference>
<dbReference type="InterPro" id="IPR050062">
    <property type="entry name" value="Pro-tRNA_synthetase"/>
</dbReference>
<dbReference type="InterPro" id="IPR044140">
    <property type="entry name" value="ProRS_anticodon_short"/>
</dbReference>
<dbReference type="InterPro" id="IPR033730">
    <property type="entry name" value="ProRS_core_prok"/>
</dbReference>
<dbReference type="InterPro" id="IPR036754">
    <property type="entry name" value="YbaK/aa-tRNA-synt-asso_dom_sf"/>
</dbReference>
<dbReference type="InterPro" id="IPR007214">
    <property type="entry name" value="YbaK/aa-tRNA-synth-assoc-dom"/>
</dbReference>
<dbReference type="NCBIfam" id="NF006625">
    <property type="entry name" value="PRK09194.1"/>
    <property type="match status" value="1"/>
</dbReference>
<dbReference type="NCBIfam" id="TIGR00409">
    <property type="entry name" value="proS_fam_II"/>
    <property type="match status" value="1"/>
</dbReference>
<dbReference type="PANTHER" id="PTHR42753">
    <property type="entry name" value="MITOCHONDRIAL RIBOSOME PROTEIN L39/PROLYL-TRNA LIGASE FAMILY MEMBER"/>
    <property type="match status" value="1"/>
</dbReference>
<dbReference type="PANTHER" id="PTHR42753:SF2">
    <property type="entry name" value="PROLINE--TRNA LIGASE"/>
    <property type="match status" value="1"/>
</dbReference>
<dbReference type="Pfam" id="PF03129">
    <property type="entry name" value="HGTP_anticodon"/>
    <property type="match status" value="1"/>
</dbReference>
<dbReference type="Pfam" id="PF00587">
    <property type="entry name" value="tRNA-synt_2b"/>
    <property type="match status" value="1"/>
</dbReference>
<dbReference type="Pfam" id="PF04073">
    <property type="entry name" value="tRNA_edit"/>
    <property type="match status" value="1"/>
</dbReference>
<dbReference type="PIRSF" id="PIRSF001535">
    <property type="entry name" value="ProRS_1"/>
    <property type="match status" value="1"/>
</dbReference>
<dbReference type="PRINTS" id="PR01046">
    <property type="entry name" value="TRNASYNTHPRO"/>
</dbReference>
<dbReference type="SUPFAM" id="SSF52954">
    <property type="entry name" value="Class II aaRS ABD-related"/>
    <property type="match status" value="1"/>
</dbReference>
<dbReference type="SUPFAM" id="SSF55681">
    <property type="entry name" value="Class II aaRS and biotin synthetases"/>
    <property type="match status" value="1"/>
</dbReference>
<dbReference type="SUPFAM" id="SSF55826">
    <property type="entry name" value="YbaK/ProRS associated domain"/>
    <property type="match status" value="1"/>
</dbReference>
<dbReference type="PROSITE" id="PS50862">
    <property type="entry name" value="AA_TRNA_LIGASE_II"/>
    <property type="match status" value="1"/>
</dbReference>
<feature type="chain" id="PRO_1000199420" description="Proline--tRNA ligase">
    <location>
        <begin position="1"/>
        <end position="572"/>
    </location>
</feature>
<keyword id="KW-0030">Aminoacyl-tRNA synthetase</keyword>
<keyword id="KW-0067">ATP-binding</keyword>
<keyword id="KW-0963">Cytoplasm</keyword>
<keyword id="KW-0436">Ligase</keyword>
<keyword id="KW-0547">Nucleotide-binding</keyword>
<keyword id="KW-0648">Protein biosynthesis</keyword>
<protein>
    <recommendedName>
        <fullName evidence="1">Proline--tRNA ligase</fullName>
        <ecNumber evidence="1">6.1.1.15</ecNumber>
    </recommendedName>
    <alternativeName>
        <fullName evidence="1">Prolyl-tRNA synthetase</fullName>
        <shortName evidence="1">ProRS</shortName>
    </alternativeName>
</protein>